<organism>
    <name type="scientific">Rickettsia rickettsii (strain Sheila Smith)</name>
    <dbReference type="NCBI Taxonomy" id="392021"/>
    <lineage>
        <taxon>Bacteria</taxon>
        <taxon>Pseudomonadati</taxon>
        <taxon>Pseudomonadota</taxon>
        <taxon>Alphaproteobacteria</taxon>
        <taxon>Rickettsiales</taxon>
        <taxon>Rickettsiaceae</taxon>
        <taxon>Rickettsieae</taxon>
        <taxon>Rickettsia</taxon>
        <taxon>spotted fever group</taxon>
    </lineage>
</organism>
<gene>
    <name evidence="2" type="primary">rpsL</name>
    <name type="ordered locus">A1G_00990</name>
</gene>
<keyword id="KW-0488">Methylation</keyword>
<keyword id="KW-0687">Ribonucleoprotein</keyword>
<keyword id="KW-0689">Ribosomal protein</keyword>
<keyword id="KW-0694">RNA-binding</keyword>
<keyword id="KW-0699">rRNA-binding</keyword>
<keyword id="KW-0820">tRNA-binding</keyword>
<evidence type="ECO:0000250" key="1"/>
<evidence type="ECO:0000255" key="2">
    <source>
        <dbReference type="HAMAP-Rule" id="MF_00403"/>
    </source>
</evidence>
<evidence type="ECO:0000256" key="3">
    <source>
        <dbReference type="SAM" id="MobiDB-lite"/>
    </source>
</evidence>
<evidence type="ECO:0000305" key="4"/>
<comment type="function">
    <text evidence="2">With S4 and S5 plays an important role in translational accuracy.</text>
</comment>
<comment type="function">
    <text evidence="2">Interacts with and stabilizes bases of the 16S rRNA that are involved in tRNA selection in the A site and with the mRNA backbone. Located at the interface of the 30S and 50S subunits, it traverses the body of the 30S subunit contacting proteins on the other side and probably holding the rRNA structure together. The combined cluster of proteins S8, S12 and S17 appears to hold together the shoulder and platform of the 30S subunit.</text>
</comment>
<comment type="subunit">
    <text evidence="2">Part of the 30S ribosomal subunit. Contacts proteins S8 and S17. May interact with IF1 in the 30S initiation complex.</text>
</comment>
<comment type="similarity">
    <text evidence="2">Belongs to the universal ribosomal protein uS12 family.</text>
</comment>
<feature type="chain" id="PRO_1000049808" description="Small ribosomal subunit protein uS12">
    <location>
        <begin position="1"/>
        <end position="129"/>
    </location>
</feature>
<feature type="region of interest" description="Disordered" evidence="3">
    <location>
        <begin position="1"/>
        <end position="25"/>
    </location>
</feature>
<feature type="region of interest" description="Disordered" evidence="3">
    <location>
        <begin position="110"/>
        <end position="129"/>
    </location>
</feature>
<feature type="compositionally biased region" description="Basic residues" evidence="3">
    <location>
        <begin position="10"/>
        <end position="20"/>
    </location>
</feature>
<feature type="modified residue" description="3-methylthioaspartic acid" evidence="1">
    <location>
        <position position="89"/>
    </location>
</feature>
<sequence length="129" mass="14291">MPTYNQLVRFGRKSKTRKTKSPALESNPFKSGVCLVVKTVTPKKPNSALRKIATVRLSNKRTVNAYIPGEKHSVKEHDRVLVRGGQVPDLPGVKYHIVLGAYDIAGVKGRKQGRSRYGAPRKQVAVTKK</sequence>
<accession>A8GQV5</accession>
<reference key="1">
    <citation type="submission" date="2007-09" db="EMBL/GenBank/DDBJ databases">
        <title>Complete genome sequence of Rickettsia rickettsii.</title>
        <authorList>
            <person name="Madan A."/>
            <person name="Fahey J."/>
            <person name="Helton E."/>
            <person name="Ketteman M."/>
            <person name="Madan A."/>
            <person name="Rodrigues S."/>
            <person name="Sanchez A."/>
            <person name="Dasch G."/>
            <person name="Eremeeva M."/>
        </authorList>
    </citation>
    <scope>NUCLEOTIDE SEQUENCE [LARGE SCALE GENOMIC DNA]</scope>
    <source>
        <strain>Sheila Smith</strain>
    </source>
</reference>
<protein>
    <recommendedName>
        <fullName evidence="2">Small ribosomal subunit protein uS12</fullName>
    </recommendedName>
    <alternativeName>
        <fullName evidence="4">30S ribosomal protein S12</fullName>
    </alternativeName>
</protein>
<name>RS12_RICRS</name>
<dbReference type="EMBL" id="CP000848">
    <property type="protein sequence ID" value="ABV75780.1"/>
    <property type="molecule type" value="Genomic_DNA"/>
</dbReference>
<dbReference type="RefSeq" id="WP_004996647.1">
    <property type="nucleotide sequence ID" value="NZ_CP121767.1"/>
</dbReference>
<dbReference type="SMR" id="A8GQV5"/>
<dbReference type="GeneID" id="95361887"/>
<dbReference type="KEGG" id="rri:A1G_00990"/>
<dbReference type="HOGENOM" id="CLU_104295_1_3_5"/>
<dbReference type="Proteomes" id="UP000006832">
    <property type="component" value="Chromosome"/>
</dbReference>
<dbReference type="GO" id="GO:0015935">
    <property type="term" value="C:small ribosomal subunit"/>
    <property type="evidence" value="ECO:0007669"/>
    <property type="project" value="InterPro"/>
</dbReference>
<dbReference type="GO" id="GO:0019843">
    <property type="term" value="F:rRNA binding"/>
    <property type="evidence" value="ECO:0007669"/>
    <property type="project" value="UniProtKB-UniRule"/>
</dbReference>
<dbReference type="GO" id="GO:0003735">
    <property type="term" value="F:structural constituent of ribosome"/>
    <property type="evidence" value="ECO:0007669"/>
    <property type="project" value="InterPro"/>
</dbReference>
<dbReference type="GO" id="GO:0000049">
    <property type="term" value="F:tRNA binding"/>
    <property type="evidence" value="ECO:0007669"/>
    <property type="project" value="UniProtKB-UniRule"/>
</dbReference>
<dbReference type="GO" id="GO:0006412">
    <property type="term" value="P:translation"/>
    <property type="evidence" value="ECO:0007669"/>
    <property type="project" value="UniProtKB-UniRule"/>
</dbReference>
<dbReference type="CDD" id="cd03368">
    <property type="entry name" value="Ribosomal_S12"/>
    <property type="match status" value="1"/>
</dbReference>
<dbReference type="FunFam" id="2.40.50.140:FF:000192">
    <property type="entry name" value="Mitochondrial ribosomal protein S12"/>
    <property type="match status" value="1"/>
</dbReference>
<dbReference type="Gene3D" id="2.40.50.140">
    <property type="entry name" value="Nucleic acid-binding proteins"/>
    <property type="match status" value="1"/>
</dbReference>
<dbReference type="HAMAP" id="MF_00403_B">
    <property type="entry name" value="Ribosomal_uS12_B"/>
    <property type="match status" value="1"/>
</dbReference>
<dbReference type="InterPro" id="IPR012340">
    <property type="entry name" value="NA-bd_OB-fold"/>
</dbReference>
<dbReference type="InterPro" id="IPR006032">
    <property type="entry name" value="Ribosomal_uS12"/>
</dbReference>
<dbReference type="InterPro" id="IPR005679">
    <property type="entry name" value="Ribosomal_uS12_bac"/>
</dbReference>
<dbReference type="NCBIfam" id="TIGR00981">
    <property type="entry name" value="rpsL_bact"/>
    <property type="match status" value="1"/>
</dbReference>
<dbReference type="PANTHER" id="PTHR11652">
    <property type="entry name" value="30S RIBOSOMAL PROTEIN S12 FAMILY MEMBER"/>
    <property type="match status" value="1"/>
</dbReference>
<dbReference type="Pfam" id="PF00164">
    <property type="entry name" value="Ribosom_S12_S23"/>
    <property type="match status" value="1"/>
</dbReference>
<dbReference type="PIRSF" id="PIRSF002133">
    <property type="entry name" value="Ribosomal_S12/S23"/>
    <property type="match status" value="1"/>
</dbReference>
<dbReference type="PRINTS" id="PR01034">
    <property type="entry name" value="RIBOSOMALS12"/>
</dbReference>
<dbReference type="SUPFAM" id="SSF50249">
    <property type="entry name" value="Nucleic acid-binding proteins"/>
    <property type="match status" value="1"/>
</dbReference>
<dbReference type="PROSITE" id="PS00055">
    <property type="entry name" value="RIBOSOMAL_S12"/>
    <property type="match status" value="1"/>
</dbReference>
<proteinExistence type="inferred from homology"/>